<organism>
    <name type="scientific">Streptococcus equi subsp. zooepidemicus (strain MGCS10565)</name>
    <dbReference type="NCBI Taxonomy" id="552526"/>
    <lineage>
        <taxon>Bacteria</taxon>
        <taxon>Bacillati</taxon>
        <taxon>Bacillota</taxon>
        <taxon>Bacilli</taxon>
        <taxon>Lactobacillales</taxon>
        <taxon>Streptococcaceae</taxon>
        <taxon>Streptococcus</taxon>
    </lineage>
</organism>
<feature type="chain" id="PRO_1000128177" description="Small ribosomal subunit protein uS9">
    <location>
        <begin position="1"/>
        <end position="130"/>
    </location>
</feature>
<protein>
    <recommendedName>
        <fullName evidence="1">Small ribosomal subunit protein uS9</fullName>
    </recommendedName>
    <alternativeName>
        <fullName evidence="2">30S ribosomal protein S9</fullName>
    </alternativeName>
</protein>
<accession>B4U561</accession>
<evidence type="ECO:0000255" key="1">
    <source>
        <dbReference type="HAMAP-Rule" id="MF_00532"/>
    </source>
</evidence>
<evidence type="ECO:0000305" key="2"/>
<dbReference type="EMBL" id="CP001129">
    <property type="protein sequence ID" value="ACG63072.1"/>
    <property type="molecule type" value="Genomic_DNA"/>
</dbReference>
<dbReference type="RefSeq" id="WP_012516324.1">
    <property type="nucleotide sequence ID" value="NC_011134.1"/>
</dbReference>
<dbReference type="SMR" id="B4U561"/>
<dbReference type="GeneID" id="83705654"/>
<dbReference type="KEGG" id="sez:Sez_1745"/>
<dbReference type="HOGENOM" id="CLU_046483_2_1_9"/>
<dbReference type="Proteomes" id="UP000001873">
    <property type="component" value="Chromosome"/>
</dbReference>
<dbReference type="GO" id="GO:0022627">
    <property type="term" value="C:cytosolic small ribosomal subunit"/>
    <property type="evidence" value="ECO:0007669"/>
    <property type="project" value="TreeGrafter"/>
</dbReference>
<dbReference type="GO" id="GO:0003723">
    <property type="term" value="F:RNA binding"/>
    <property type="evidence" value="ECO:0007669"/>
    <property type="project" value="TreeGrafter"/>
</dbReference>
<dbReference type="GO" id="GO:0003735">
    <property type="term" value="F:structural constituent of ribosome"/>
    <property type="evidence" value="ECO:0007669"/>
    <property type="project" value="InterPro"/>
</dbReference>
<dbReference type="GO" id="GO:0006412">
    <property type="term" value="P:translation"/>
    <property type="evidence" value="ECO:0007669"/>
    <property type="project" value="UniProtKB-UniRule"/>
</dbReference>
<dbReference type="FunFam" id="3.30.230.10:FF:000001">
    <property type="entry name" value="30S ribosomal protein S9"/>
    <property type="match status" value="1"/>
</dbReference>
<dbReference type="Gene3D" id="3.30.230.10">
    <property type="match status" value="1"/>
</dbReference>
<dbReference type="HAMAP" id="MF_00532_B">
    <property type="entry name" value="Ribosomal_uS9_B"/>
    <property type="match status" value="1"/>
</dbReference>
<dbReference type="InterPro" id="IPR020568">
    <property type="entry name" value="Ribosomal_Su5_D2-typ_SF"/>
</dbReference>
<dbReference type="InterPro" id="IPR000754">
    <property type="entry name" value="Ribosomal_uS9"/>
</dbReference>
<dbReference type="InterPro" id="IPR023035">
    <property type="entry name" value="Ribosomal_uS9_bac/plastid"/>
</dbReference>
<dbReference type="InterPro" id="IPR020574">
    <property type="entry name" value="Ribosomal_uS9_CS"/>
</dbReference>
<dbReference type="InterPro" id="IPR014721">
    <property type="entry name" value="Ribsml_uS5_D2-typ_fold_subgr"/>
</dbReference>
<dbReference type="NCBIfam" id="NF001099">
    <property type="entry name" value="PRK00132.1"/>
    <property type="match status" value="1"/>
</dbReference>
<dbReference type="PANTHER" id="PTHR21569">
    <property type="entry name" value="RIBOSOMAL PROTEIN S9"/>
    <property type="match status" value="1"/>
</dbReference>
<dbReference type="PANTHER" id="PTHR21569:SF1">
    <property type="entry name" value="SMALL RIBOSOMAL SUBUNIT PROTEIN US9M"/>
    <property type="match status" value="1"/>
</dbReference>
<dbReference type="Pfam" id="PF00380">
    <property type="entry name" value="Ribosomal_S9"/>
    <property type="match status" value="1"/>
</dbReference>
<dbReference type="SUPFAM" id="SSF54211">
    <property type="entry name" value="Ribosomal protein S5 domain 2-like"/>
    <property type="match status" value="1"/>
</dbReference>
<dbReference type="PROSITE" id="PS00360">
    <property type="entry name" value="RIBOSOMAL_S9"/>
    <property type="match status" value="1"/>
</dbReference>
<proteinExistence type="inferred from homology"/>
<sequence length="130" mass="14235">MAQAQYAGTGRRKNAVARVRLVPGTGKITVNKKDVEEYIPHADLRLVINQPFAVTSTEGSYDVFVNVVGGGYAGQSGAIRHGIARALLQVDPDFRDSLKRAGLLTRDARMVERKKPGLKKARKASQFSKR</sequence>
<reference key="1">
    <citation type="journal article" date="2008" name="PLoS ONE">
        <title>Genome sequence of a lancefield group C Streptococcus zooepidemicus strain causing epidemic nephritis: new information about an old disease.</title>
        <authorList>
            <person name="Beres S.B."/>
            <person name="Sesso R."/>
            <person name="Pinto S.W.L."/>
            <person name="Hoe N.P."/>
            <person name="Porcella S.F."/>
            <person name="Deleo F.R."/>
            <person name="Musser J.M."/>
        </authorList>
    </citation>
    <scope>NUCLEOTIDE SEQUENCE [LARGE SCALE GENOMIC DNA]</scope>
    <source>
        <strain>MGCS10565</strain>
    </source>
</reference>
<keyword id="KW-0687">Ribonucleoprotein</keyword>
<keyword id="KW-0689">Ribosomal protein</keyword>
<gene>
    <name evidence="1" type="primary">rpsI</name>
    <name type="ordered locus">Sez_1745</name>
</gene>
<comment type="similarity">
    <text evidence="1">Belongs to the universal ribosomal protein uS9 family.</text>
</comment>
<name>RS9_STREM</name>